<feature type="chain" id="PRO_0000111897" description="Protein-L-isoaspartate O-methyltransferase">
    <location>
        <begin position="1"/>
        <end position="211"/>
    </location>
</feature>
<feature type="active site" evidence="1">
    <location>
        <position position="60"/>
    </location>
</feature>
<proteinExistence type="inferred from homology"/>
<sequence length="211" mass="23407">MTSQRTRERLIQRLYEEGLSNAHVLEVIRRTPRHLFVDEALSHRAYEDTALPIGHNQTISQPFMVARMTELLLAAGPLDKVMEIGTGSGYQTAVLAQLVERVFSVERIQALQDKAKERLAELNLRNVVFRWGDGWEGWSALAPYNGIIVTAAATEVPQSLLDQLAPGGRLVIPVGGGEVQQLMLIVRTEDGFSRQVLDSVRFVPLLNGPIA</sequence>
<protein>
    <recommendedName>
        <fullName>Protein-L-isoaspartate O-methyltransferase</fullName>
        <ecNumber>2.1.1.77</ecNumber>
    </recommendedName>
    <alternativeName>
        <fullName>L-isoaspartyl protein carboxyl methyltransferase</fullName>
    </alternativeName>
    <alternativeName>
        <fullName>Protein L-isoaspartyl methyltransferase</fullName>
    </alternativeName>
    <alternativeName>
        <fullName>Protein-beta-aspartate methyltransferase</fullName>
        <shortName>PIMT</shortName>
    </alternativeName>
</protein>
<accession>P45683</accession>
<accession>Q9HY06</accession>
<evidence type="ECO:0000250" key="1"/>
<evidence type="ECO:0000305" key="2"/>
<gene>
    <name type="primary">pcm</name>
    <name type="ordered locus">PA3624</name>
</gene>
<reference key="1">
    <citation type="journal article" date="2000" name="Nature">
        <title>Complete genome sequence of Pseudomonas aeruginosa PAO1, an opportunistic pathogen.</title>
        <authorList>
            <person name="Stover C.K."/>
            <person name="Pham X.-Q.T."/>
            <person name="Erwin A.L."/>
            <person name="Mizoguchi S.D."/>
            <person name="Warrener P."/>
            <person name="Hickey M.J."/>
            <person name="Brinkman F.S.L."/>
            <person name="Hufnagle W.O."/>
            <person name="Kowalik D.J."/>
            <person name="Lagrou M."/>
            <person name="Garber R.L."/>
            <person name="Goltry L."/>
            <person name="Tolentino E."/>
            <person name="Westbrock-Wadman S."/>
            <person name="Yuan Y."/>
            <person name="Brody L.L."/>
            <person name="Coulter S.N."/>
            <person name="Folger K.R."/>
            <person name="Kas A."/>
            <person name="Larbig K."/>
            <person name="Lim R.M."/>
            <person name="Smith K.A."/>
            <person name="Spencer D.H."/>
            <person name="Wong G.K.-S."/>
            <person name="Wu Z."/>
            <person name="Paulsen I.T."/>
            <person name="Reizer J."/>
            <person name="Saier M.H. Jr."/>
            <person name="Hancock R.E.W."/>
            <person name="Lory S."/>
            <person name="Olson M.V."/>
        </authorList>
    </citation>
    <scope>NUCLEOTIDE SEQUENCE [LARGE SCALE GENOMIC DNA]</scope>
    <source>
        <strain>ATCC 15692 / DSM 22644 / CIP 104116 / JCM 14847 / LMG 12228 / 1C / PRS 101 / PAO1</strain>
    </source>
</reference>
<reference key="2">
    <citation type="journal article" date="1994" name="Gene">
        <title>Cloning, analysis and expression of an rpoS homologue gene from Pseudomonas aeruginosa PAO1.</title>
        <authorList>
            <person name="Tanaka K."/>
            <person name="Takahashi H."/>
        </authorList>
    </citation>
    <scope>NUCLEOTIDE SEQUENCE [GENOMIC DNA] OF 108-211</scope>
    <source>
        <strain>ATCC 15692 / DSM 22644 / CIP 104116 / JCM 14847 / LMG 12228 / 1C / PRS 101 / PAO1</strain>
    </source>
</reference>
<keyword id="KW-0963">Cytoplasm</keyword>
<keyword id="KW-0489">Methyltransferase</keyword>
<keyword id="KW-1185">Reference proteome</keyword>
<keyword id="KW-0949">S-adenosyl-L-methionine</keyword>
<keyword id="KW-0808">Transferase</keyword>
<name>PIMT_PSEAE</name>
<comment type="function">
    <text evidence="1">Catalyzes the methyl esterification of L-isoaspartyl residues in peptides and proteins that result from spontaneous decomposition of normal L-aspartyl and L-asparaginyl residues. It plays a role in the repair and/or degradation of damaged proteins (By similarity).</text>
</comment>
<comment type="catalytic activity">
    <reaction>
        <text>[protein]-L-isoaspartate + S-adenosyl-L-methionine = [protein]-L-isoaspartate alpha-methyl ester + S-adenosyl-L-homocysteine</text>
        <dbReference type="Rhea" id="RHEA:12705"/>
        <dbReference type="Rhea" id="RHEA-COMP:12143"/>
        <dbReference type="Rhea" id="RHEA-COMP:12144"/>
        <dbReference type="ChEBI" id="CHEBI:57856"/>
        <dbReference type="ChEBI" id="CHEBI:59789"/>
        <dbReference type="ChEBI" id="CHEBI:90596"/>
        <dbReference type="ChEBI" id="CHEBI:90598"/>
        <dbReference type="EC" id="2.1.1.77"/>
    </reaction>
</comment>
<comment type="subunit">
    <text evidence="1">Monomer.</text>
</comment>
<comment type="subcellular location">
    <subcellularLocation>
        <location evidence="1">Cytoplasm</location>
    </subcellularLocation>
</comment>
<comment type="similarity">
    <text evidence="2">Belongs to the methyltransferase superfamily. L-isoaspartyl/D-aspartyl protein methyltransferase family.</text>
</comment>
<organism>
    <name type="scientific">Pseudomonas aeruginosa (strain ATCC 15692 / DSM 22644 / CIP 104116 / JCM 14847 / LMG 12228 / 1C / PRS 101 / PAO1)</name>
    <dbReference type="NCBI Taxonomy" id="208964"/>
    <lineage>
        <taxon>Bacteria</taxon>
        <taxon>Pseudomonadati</taxon>
        <taxon>Pseudomonadota</taxon>
        <taxon>Gammaproteobacteria</taxon>
        <taxon>Pseudomonadales</taxon>
        <taxon>Pseudomonadaceae</taxon>
        <taxon>Pseudomonas</taxon>
    </lineage>
</organism>
<dbReference type="EC" id="2.1.1.77"/>
<dbReference type="EMBL" id="AE004091">
    <property type="protein sequence ID" value="AAG07012.1"/>
    <property type="molecule type" value="Genomic_DNA"/>
</dbReference>
<dbReference type="EMBL" id="D26134">
    <property type="protein sequence ID" value="BAA05129.1"/>
    <property type="molecule type" value="Genomic_DNA"/>
</dbReference>
<dbReference type="PIR" id="F83193">
    <property type="entry name" value="F83193"/>
</dbReference>
<dbReference type="PIR" id="S55062">
    <property type="entry name" value="S55062"/>
</dbReference>
<dbReference type="RefSeq" id="NP_252314.1">
    <property type="nucleotide sequence ID" value="NC_002516.2"/>
</dbReference>
<dbReference type="RefSeq" id="WP_003098558.1">
    <property type="nucleotide sequence ID" value="NZ_QZGE01000001.1"/>
</dbReference>
<dbReference type="SMR" id="P45683"/>
<dbReference type="FunCoup" id="P45683">
    <property type="interactions" value="541"/>
</dbReference>
<dbReference type="STRING" id="208964.PA3624"/>
<dbReference type="PaxDb" id="208964-PA3624"/>
<dbReference type="DNASU" id="880441"/>
<dbReference type="GeneID" id="880441"/>
<dbReference type="KEGG" id="pae:PA3624"/>
<dbReference type="PATRIC" id="fig|208964.12.peg.3793"/>
<dbReference type="PseudoCAP" id="PA3624"/>
<dbReference type="HOGENOM" id="CLU_055432_2_0_6"/>
<dbReference type="InParanoid" id="P45683"/>
<dbReference type="OrthoDB" id="9810066at2"/>
<dbReference type="PhylomeDB" id="P45683"/>
<dbReference type="BioCyc" id="PAER208964:G1FZ6-3694-MONOMER"/>
<dbReference type="Proteomes" id="UP000002438">
    <property type="component" value="Chromosome"/>
</dbReference>
<dbReference type="GO" id="GO:0005737">
    <property type="term" value="C:cytoplasm"/>
    <property type="evidence" value="ECO:0000318"/>
    <property type="project" value="GO_Central"/>
</dbReference>
<dbReference type="GO" id="GO:0004719">
    <property type="term" value="F:protein-L-isoaspartate (D-aspartate) O-methyltransferase activity"/>
    <property type="evidence" value="ECO:0000318"/>
    <property type="project" value="GO_Central"/>
</dbReference>
<dbReference type="GO" id="GO:0032259">
    <property type="term" value="P:methylation"/>
    <property type="evidence" value="ECO:0007669"/>
    <property type="project" value="UniProtKB-KW"/>
</dbReference>
<dbReference type="GO" id="GO:0036211">
    <property type="term" value="P:protein modification process"/>
    <property type="evidence" value="ECO:0007669"/>
    <property type="project" value="UniProtKB-UniRule"/>
</dbReference>
<dbReference type="GO" id="GO:0030091">
    <property type="term" value="P:protein repair"/>
    <property type="evidence" value="ECO:0007669"/>
    <property type="project" value="UniProtKB-UniRule"/>
</dbReference>
<dbReference type="CDD" id="cd02440">
    <property type="entry name" value="AdoMet_MTases"/>
    <property type="match status" value="1"/>
</dbReference>
<dbReference type="FunFam" id="3.40.50.150:FF:000010">
    <property type="entry name" value="Protein-L-isoaspartate O-methyltransferase"/>
    <property type="match status" value="1"/>
</dbReference>
<dbReference type="Gene3D" id="3.40.50.150">
    <property type="entry name" value="Vaccinia Virus protein VP39"/>
    <property type="match status" value="1"/>
</dbReference>
<dbReference type="HAMAP" id="MF_00090">
    <property type="entry name" value="PIMT"/>
    <property type="match status" value="1"/>
</dbReference>
<dbReference type="InterPro" id="IPR000682">
    <property type="entry name" value="PCMT"/>
</dbReference>
<dbReference type="InterPro" id="IPR029063">
    <property type="entry name" value="SAM-dependent_MTases_sf"/>
</dbReference>
<dbReference type="NCBIfam" id="TIGR00080">
    <property type="entry name" value="pimt"/>
    <property type="match status" value="1"/>
</dbReference>
<dbReference type="NCBIfam" id="NF001453">
    <property type="entry name" value="PRK00312.1"/>
    <property type="match status" value="1"/>
</dbReference>
<dbReference type="PANTHER" id="PTHR11579">
    <property type="entry name" value="PROTEIN-L-ISOASPARTATE O-METHYLTRANSFERASE"/>
    <property type="match status" value="1"/>
</dbReference>
<dbReference type="PANTHER" id="PTHR11579:SF0">
    <property type="entry name" value="PROTEIN-L-ISOASPARTATE(D-ASPARTATE) O-METHYLTRANSFERASE"/>
    <property type="match status" value="1"/>
</dbReference>
<dbReference type="Pfam" id="PF01135">
    <property type="entry name" value="PCMT"/>
    <property type="match status" value="1"/>
</dbReference>
<dbReference type="SUPFAM" id="SSF53335">
    <property type="entry name" value="S-adenosyl-L-methionine-dependent methyltransferases"/>
    <property type="match status" value="1"/>
</dbReference>
<dbReference type="PROSITE" id="PS01279">
    <property type="entry name" value="PCMT"/>
    <property type="match status" value="1"/>
</dbReference>